<keyword id="KW-0012">Acyltransferase</keyword>
<keyword id="KW-0998">Cell outer membrane</keyword>
<keyword id="KW-0472">Membrane</keyword>
<keyword id="KW-0732">Signal</keyword>
<keyword id="KW-0808">Transferase</keyword>
<organism>
    <name type="scientific">Yersinia pestis bv. Antiqua (strain Antiqua)</name>
    <dbReference type="NCBI Taxonomy" id="360102"/>
    <lineage>
        <taxon>Bacteria</taxon>
        <taxon>Pseudomonadati</taxon>
        <taxon>Pseudomonadota</taxon>
        <taxon>Gammaproteobacteria</taxon>
        <taxon>Enterobacterales</taxon>
        <taxon>Yersiniaceae</taxon>
        <taxon>Yersinia</taxon>
    </lineage>
</organism>
<name>PAGP_YERPA</name>
<proteinExistence type="inferred from homology"/>
<evidence type="ECO:0000255" key="1">
    <source>
        <dbReference type="HAMAP-Rule" id="MF_00837"/>
    </source>
</evidence>
<gene>
    <name evidence="1" type="primary">pagP</name>
    <name type="ordered locus">YPA_1118</name>
</gene>
<reference key="1">
    <citation type="journal article" date="2006" name="J. Bacteriol.">
        <title>Complete genome sequence of Yersinia pestis strains Antiqua and Nepal516: evidence of gene reduction in an emerging pathogen.</title>
        <authorList>
            <person name="Chain P.S.G."/>
            <person name="Hu P."/>
            <person name="Malfatti S.A."/>
            <person name="Radnedge L."/>
            <person name="Larimer F."/>
            <person name="Vergez L.M."/>
            <person name="Worsham P."/>
            <person name="Chu M.C."/>
            <person name="Andersen G.L."/>
        </authorList>
    </citation>
    <scope>NUCLEOTIDE SEQUENCE [LARGE SCALE GENOMIC DNA]</scope>
    <source>
        <strain>Antiqua</strain>
    </source>
</reference>
<comment type="function">
    <text evidence="1">Transfers a fatty acid residue from the sn-1 position of a phospholipid to the N-linked hydroxyfatty acid chain on the proximal unit of lipid A or its precursors.</text>
</comment>
<comment type="catalytic activity">
    <reaction evidence="1">
        <text>a lipid A + a 1,2-diacyl-sn-glycero-3-phosphocholine = a hepta-acyl lipid A + a 2-acyl-sn-glycero-3-phosphocholine</text>
        <dbReference type="Rhea" id="RHEA:74275"/>
        <dbReference type="ChEBI" id="CHEBI:57643"/>
        <dbReference type="ChEBI" id="CHEBI:57875"/>
        <dbReference type="ChEBI" id="CHEBI:193141"/>
        <dbReference type="ChEBI" id="CHEBI:193142"/>
        <dbReference type="EC" id="2.3.1.251"/>
    </reaction>
</comment>
<comment type="catalytic activity">
    <reaction evidence="1">
        <text>a lipid IVA + a 1,2-diacyl-sn-glycero-3-phosphocholine = a lipid IVB + a 2-acyl-sn-glycero-3-phosphocholine</text>
        <dbReference type="Rhea" id="RHEA:74279"/>
        <dbReference type="ChEBI" id="CHEBI:57643"/>
        <dbReference type="ChEBI" id="CHEBI:57875"/>
        <dbReference type="ChEBI" id="CHEBI:176425"/>
        <dbReference type="ChEBI" id="CHEBI:193143"/>
        <dbReference type="EC" id="2.3.1.251"/>
    </reaction>
</comment>
<comment type="catalytic activity">
    <reaction evidence="1">
        <text>a lipid IIA + a 1,2-diacyl-sn-glycero-3-phosphocholine = a lipid IIB + a 2-acyl-sn-glycero-3-phosphocholine</text>
        <dbReference type="Rhea" id="RHEA:74283"/>
        <dbReference type="ChEBI" id="CHEBI:57643"/>
        <dbReference type="ChEBI" id="CHEBI:57875"/>
        <dbReference type="ChEBI" id="CHEBI:193144"/>
        <dbReference type="ChEBI" id="CHEBI:193145"/>
        <dbReference type="EC" id="2.3.1.251"/>
    </reaction>
</comment>
<comment type="subunit">
    <text evidence="1">Homodimer.</text>
</comment>
<comment type="subcellular location">
    <subcellularLocation>
        <location evidence="1">Cell outer membrane</location>
    </subcellularLocation>
</comment>
<comment type="similarity">
    <text evidence="1">Belongs to the lipid A palmitoyltransferase family.</text>
</comment>
<sequence>MNYKDIINACILSGVFLLHSPSALADTPSVGVSKGQESLQPAAEGNLWQRLIRNVSLAWNSPHQELYIPVNTWHNRWTYDDEKIASYNERPWGVGYGKYRYDEDNNWHSVYAMAFMDSHNRVEPILGYGYQKMWIPGEREGWRFGAGFTASITARYEYHYIPLPLPLPLISIEYNRLSLQTTYIPGTYNNGNVLFTWIR</sequence>
<dbReference type="EC" id="2.3.1.251" evidence="1"/>
<dbReference type="EMBL" id="CP000308">
    <property type="protein sequence ID" value="ABG13085.1"/>
    <property type="molecule type" value="Genomic_DNA"/>
</dbReference>
<dbReference type="PIR" id="AG0212">
    <property type="entry name" value="AG0212"/>
</dbReference>
<dbReference type="RefSeq" id="WP_002221007.1">
    <property type="nucleotide sequence ID" value="NZ_CP009906.1"/>
</dbReference>
<dbReference type="SMR" id="Q1C8Y7"/>
<dbReference type="GeneID" id="57976834"/>
<dbReference type="KEGG" id="ypa:YPA_1118"/>
<dbReference type="Proteomes" id="UP000001971">
    <property type="component" value="Chromosome"/>
</dbReference>
<dbReference type="GO" id="GO:0009279">
    <property type="term" value="C:cell outer membrane"/>
    <property type="evidence" value="ECO:0007669"/>
    <property type="project" value="UniProtKB-SubCell"/>
</dbReference>
<dbReference type="GO" id="GO:0016746">
    <property type="term" value="F:acyltransferase activity"/>
    <property type="evidence" value="ECO:0007669"/>
    <property type="project" value="UniProtKB-UniRule"/>
</dbReference>
<dbReference type="GO" id="GO:0009245">
    <property type="term" value="P:lipid A biosynthetic process"/>
    <property type="evidence" value="ECO:0007669"/>
    <property type="project" value="UniProtKB-UniRule"/>
</dbReference>
<dbReference type="FunFam" id="2.40.160.20:FF:000002">
    <property type="entry name" value="Lipid A palmitoyltransferase PagP"/>
    <property type="match status" value="1"/>
</dbReference>
<dbReference type="Gene3D" id="2.40.160.20">
    <property type="match status" value="1"/>
</dbReference>
<dbReference type="HAMAP" id="MF_00837">
    <property type="entry name" value="PagP_transferase"/>
    <property type="match status" value="1"/>
</dbReference>
<dbReference type="InterPro" id="IPR009746">
    <property type="entry name" value="LipidA_acyl_PagP"/>
</dbReference>
<dbReference type="InterPro" id="IPR011250">
    <property type="entry name" value="OMP/PagP_b-brl"/>
</dbReference>
<dbReference type="NCBIfam" id="NF008271">
    <property type="entry name" value="PRK11045.1"/>
    <property type="match status" value="1"/>
</dbReference>
<dbReference type="Pfam" id="PF07017">
    <property type="entry name" value="PagP"/>
    <property type="match status" value="1"/>
</dbReference>
<dbReference type="SUPFAM" id="SSF56925">
    <property type="entry name" value="OMPA-like"/>
    <property type="match status" value="1"/>
</dbReference>
<feature type="signal peptide" evidence="1">
    <location>
        <begin position="1"/>
        <end position="25"/>
    </location>
</feature>
<feature type="chain" id="PRO_5000115892" description="Lipid A acyltransferase PagP">
    <location>
        <begin position="26"/>
        <end position="199"/>
    </location>
</feature>
<feature type="active site" evidence="1">
    <location>
        <position position="74"/>
    </location>
</feature>
<feature type="active site" evidence="1">
    <location>
        <position position="117"/>
    </location>
</feature>
<feature type="active site" evidence="1">
    <location>
        <position position="118"/>
    </location>
</feature>
<feature type="site" description="Role in lipopolysaccharide recognition" evidence="1">
    <location>
        <position position="83"/>
    </location>
</feature>
<feature type="site" description="Role in the phospholipid gating" evidence="1">
    <location>
        <position position="188"/>
    </location>
</feature>
<protein>
    <recommendedName>
        <fullName evidence="1">Lipid A acyltransferase PagP</fullName>
        <ecNumber evidence="1">2.3.1.251</ecNumber>
    </recommendedName>
    <alternativeName>
        <fullName evidence="1">Lipid A acylation protein</fullName>
    </alternativeName>
</protein>
<accession>Q1C8Y7</accession>